<keyword id="KW-1185">Reference proteome</keyword>
<keyword id="KW-0687">Ribonucleoprotein</keyword>
<keyword id="KW-0689">Ribosomal protein</keyword>
<keyword id="KW-0694">RNA-binding</keyword>
<keyword id="KW-0699">rRNA-binding</keyword>
<organism>
    <name type="scientific">Thermoanaerobacter pseudethanolicus (strain ATCC 33223 / 39E)</name>
    <name type="common">Clostridium thermohydrosulfuricum</name>
    <dbReference type="NCBI Taxonomy" id="340099"/>
    <lineage>
        <taxon>Bacteria</taxon>
        <taxon>Bacillati</taxon>
        <taxon>Bacillota</taxon>
        <taxon>Clostridia</taxon>
        <taxon>Thermoanaerobacterales</taxon>
        <taxon>Thermoanaerobacteraceae</taxon>
        <taxon>Thermoanaerobacter</taxon>
    </lineage>
</organism>
<accession>B0K8G4</accession>
<evidence type="ECO:0000255" key="1">
    <source>
        <dbReference type="HAMAP-Rule" id="MF_00360"/>
    </source>
</evidence>
<evidence type="ECO:0000305" key="2"/>
<feature type="chain" id="PRO_1000120816" description="Small ribosomal subunit protein bS6">
    <location>
        <begin position="1"/>
        <end position="95"/>
    </location>
</feature>
<comment type="function">
    <text evidence="1">Binds together with bS18 to 16S ribosomal RNA.</text>
</comment>
<comment type="similarity">
    <text evidence="1">Belongs to the bacterial ribosomal protein bS6 family.</text>
</comment>
<name>RS6_THEP3</name>
<sequence length="95" mass="11320">MRSYETMYILSPDLSEEERKGLIERFKNLIIENGGEITNFDEWGKRKLAYLIDKKPEGYYVLMNFNSDSKVSQELERVYKITDGVLRYLIIRTDE</sequence>
<dbReference type="EMBL" id="CP000924">
    <property type="protein sequence ID" value="ABY95896.1"/>
    <property type="molecule type" value="Genomic_DNA"/>
</dbReference>
<dbReference type="RefSeq" id="WP_003867430.1">
    <property type="nucleotide sequence ID" value="NC_010321.1"/>
</dbReference>
<dbReference type="SMR" id="B0K8G4"/>
<dbReference type="STRING" id="340099.Teth39_2275"/>
<dbReference type="KEGG" id="tpd:Teth39_2275"/>
<dbReference type="eggNOG" id="COG0360">
    <property type="taxonomic scope" value="Bacteria"/>
</dbReference>
<dbReference type="HOGENOM" id="CLU_113441_5_1_9"/>
<dbReference type="Proteomes" id="UP000002156">
    <property type="component" value="Chromosome"/>
</dbReference>
<dbReference type="GO" id="GO:0005737">
    <property type="term" value="C:cytoplasm"/>
    <property type="evidence" value="ECO:0007669"/>
    <property type="project" value="UniProtKB-ARBA"/>
</dbReference>
<dbReference type="GO" id="GO:1990904">
    <property type="term" value="C:ribonucleoprotein complex"/>
    <property type="evidence" value="ECO:0007669"/>
    <property type="project" value="UniProtKB-KW"/>
</dbReference>
<dbReference type="GO" id="GO:0005840">
    <property type="term" value="C:ribosome"/>
    <property type="evidence" value="ECO:0007669"/>
    <property type="project" value="UniProtKB-KW"/>
</dbReference>
<dbReference type="GO" id="GO:0070181">
    <property type="term" value="F:small ribosomal subunit rRNA binding"/>
    <property type="evidence" value="ECO:0007669"/>
    <property type="project" value="TreeGrafter"/>
</dbReference>
<dbReference type="GO" id="GO:0003735">
    <property type="term" value="F:structural constituent of ribosome"/>
    <property type="evidence" value="ECO:0007669"/>
    <property type="project" value="InterPro"/>
</dbReference>
<dbReference type="GO" id="GO:0006412">
    <property type="term" value="P:translation"/>
    <property type="evidence" value="ECO:0007669"/>
    <property type="project" value="UniProtKB-UniRule"/>
</dbReference>
<dbReference type="CDD" id="cd00473">
    <property type="entry name" value="bS6"/>
    <property type="match status" value="1"/>
</dbReference>
<dbReference type="FunFam" id="3.30.70.60:FF:000002">
    <property type="entry name" value="30S ribosomal protein S6"/>
    <property type="match status" value="1"/>
</dbReference>
<dbReference type="Gene3D" id="3.30.70.60">
    <property type="match status" value="1"/>
</dbReference>
<dbReference type="HAMAP" id="MF_00360">
    <property type="entry name" value="Ribosomal_bS6"/>
    <property type="match status" value="1"/>
</dbReference>
<dbReference type="InterPro" id="IPR000529">
    <property type="entry name" value="Ribosomal_bS6"/>
</dbReference>
<dbReference type="InterPro" id="IPR035980">
    <property type="entry name" value="Ribosomal_bS6_sf"/>
</dbReference>
<dbReference type="InterPro" id="IPR020814">
    <property type="entry name" value="Ribosomal_S6_plastid/chlpt"/>
</dbReference>
<dbReference type="InterPro" id="IPR014717">
    <property type="entry name" value="Transl_elong_EF1B/ribsomal_bS6"/>
</dbReference>
<dbReference type="NCBIfam" id="TIGR00166">
    <property type="entry name" value="S6"/>
    <property type="match status" value="1"/>
</dbReference>
<dbReference type="PANTHER" id="PTHR21011">
    <property type="entry name" value="MITOCHONDRIAL 28S RIBOSOMAL PROTEIN S6"/>
    <property type="match status" value="1"/>
</dbReference>
<dbReference type="PANTHER" id="PTHR21011:SF1">
    <property type="entry name" value="SMALL RIBOSOMAL SUBUNIT PROTEIN BS6M"/>
    <property type="match status" value="1"/>
</dbReference>
<dbReference type="Pfam" id="PF01250">
    <property type="entry name" value="Ribosomal_S6"/>
    <property type="match status" value="1"/>
</dbReference>
<dbReference type="SUPFAM" id="SSF54995">
    <property type="entry name" value="Ribosomal protein S6"/>
    <property type="match status" value="1"/>
</dbReference>
<gene>
    <name evidence="1" type="primary">rpsF</name>
    <name type="ordered locus">Teth39_2275</name>
</gene>
<proteinExistence type="inferred from homology"/>
<protein>
    <recommendedName>
        <fullName evidence="1">Small ribosomal subunit protein bS6</fullName>
    </recommendedName>
    <alternativeName>
        <fullName evidence="2">30S ribosomal protein S6</fullName>
    </alternativeName>
</protein>
<reference key="1">
    <citation type="submission" date="2008-01" db="EMBL/GenBank/DDBJ databases">
        <title>Complete sequence of Thermoanaerobacter pseudethanolicus 39E.</title>
        <authorList>
            <person name="Copeland A."/>
            <person name="Lucas S."/>
            <person name="Lapidus A."/>
            <person name="Barry K."/>
            <person name="Glavina del Rio T."/>
            <person name="Dalin E."/>
            <person name="Tice H."/>
            <person name="Pitluck S."/>
            <person name="Bruce D."/>
            <person name="Goodwin L."/>
            <person name="Saunders E."/>
            <person name="Brettin T."/>
            <person name="Detter J.C."/>
            <person name="Han C."/>
            <person name="Schmutz J."/>
            <person name="Larimer F."/>
            <person name="Land M."/>
            <person name="Hauser L."/>
            <person name="Kyrpides N."/>
            <person name="Lykidis A."/>
            <person name="Hemme C."/>
            <person name="Fields M.W."/>
            <person name="He Z."/>
            <person name="Zhou J."/>
            <person name="Richardson P."/>
        </authorList>
    </citation>
    <scope>NUCLEOTIDE SEQUENCE [LARGE SCALE GENOMIC DNA]</scope>
    <source>
        <strain>ATCC 33223 / DSM 2355 / 39E</strain>
    </source>
</reference>